<sequence length="355" mass="39282">MYYDDGIPVFDSLDKLTKPNSMKVVSSDSSEKGDIVLEPLESGFALTLGNALRRVMLSSLIGSAVYGIKIDGITHEFTSIQGVREDVTDIVLNMGMLRCKLNGTSNKCLSLSAKGPCQVLAGMIETDDQCSIVNKDLLICTLGQDVELNMTIYVASGKGYLPVTKYKENEFLKPMNEQDLISFIPVNALYSPINRVSYRVENSRVGQVTDKDKLILSVETDGTISPSQAVDSAARILQEQLQPFISSDISYKKSQVSSPSGYKDLGYDPILLRKVDEMELSVRSHNCLKNENITYIGDLVQKTESEMLRTANFGRKSLNEIKAVLNNFGLSLGMDIPDWPPKDIDELARQHTDED</sequence>
<keyword id="KW-0240">DNA-directed RNA polymerase</keyword>
<keyword id="KW-0548">Nucleotidyltransferase</keyword>
<keyword id="KW-1185">Reference proteome</keyword>
<keyword id="KW-0804">Transcription</keyword>
<keyword id="KW-0808">Transferase</keyword>
<name>RPOA_WOLTR</name>
<gene>
    <name evidence="1" type="primary">rpoA</name>
    <name type="ordered locus">Wbm0318</name>
</gene>
<proteinExistence type="inferred from homology"/>
<organism>
    <name type="scientific">Wolbachia sp. subsp. Brugia malayi (strain TRS)</name>
    <dbReference type="NCBI Taxonomy" id="292805"/>
    <lineage>
        <taxon>Bacteria</taxon>
        <taxon>Pseudomonadati</taxon>
        <taxon>Pseudomonadota</taxon>
        <taxon>Alphaproteobacteria</taxon>
        <taxon>Rickettsiales</taxon>
        <taxon>Anaplasmataceae</taxon>
        <taxon>Wolbachieae</taxon>
        <taxon>Wolbachia</taxon>
    </lineage>
</organism>
<reference key="1">
    <citation type="journal article" date="2005" name="PLoS Biol.">
        <title>The Wolbachia genome of Brugia malayi: endosymbiont evolution within a human pathogenic nematode.</title>
        <authorList>
            <person name="Foster J."/>
            <person name="Ganatra M."/>
            <person name="Kamal I."/>
            <person name="Ware J."/>
            <person name="Makarova K."/>
            <person name="Ivanova N."/>
            <person name="Bhattacharyya A."/>
            <person name="Kapatral V."/>
            <person name="Kumar S."/>
            <person name="Posfai J."/>
            <person name="Vincze T."/>
            <person name="Ingram J."/>
            <person name="Moran L."/>
            <person name="Lapidus A."/>
            <person name="Omelchenko M."/>
            <person name="Kyrpides N."/>
            <person name="Ghedin E."/>
            <person name="Wang S."/>
            <person name="Goltsman E."/>
            <person name="Joukov V."/>
            <person name="Ostrovskaya O."/>
            <person name="Tsukerman K."/>
            <person name="Mazur M."/>
            <person name="Comb D."/>
            <person name="Koonin E."/>
            <person name="Slatko B."/>
        </authorList>
    </citation>
    <scope>NUCLEOTIDE SEQUENCE [LARGE SCALE GENOMIC DNA]</scope>
    <source>
        <strain>TRS</strain>
    </source>
</reference>
<dbReference type="EC" id="2.7.7.6" evidence="1"/>
<dbReference type="EMBL" id="AE017321">
    <property type="protein sequence ID" value="AAW70907.1"/>
    <property type="molecule type" value="Genomic_DNA"/>
</dbReference>
<dbReference type="RefSeq" id="WP_011256517.1">
    <property type="nucleotide sequence ID" value="NC_006833.1"/>
</dbReference>
<dbReference type="SMR" id="Q5GSW7"/>
<dbReference type="STRING" id="292805.Wbm0318"/>
<dbReference type="KEGG" id="wbm:Wbm0318"/>
<dbReference type="eggNOG" id="COG0202">
    <property type="taxonomic scope" value="Bacteria"/>
</dbReference>
<dbReference type="HOGENOM" id="CLU_053084_0_0_5"/>
<dbReference type="Proteomes" id="UP000000534">
    <property type="component" value="Chromosome"/>
</dbReference>
<dbReference type="GO" id="GO:0005737">
    <property type="term" value="C:cytoplasm"/>
    <property type="evidence" value="ECO:0007669"/>
    <property type="project" value="UniProtKB-ARBA"/>
</dbReference>
<dbReference type="GO" id="GO:0000428">
    <property type="term" value="C:DNA-directed RNA polymerase complex"/>
    <property type="evidence" value="ECO:0007669"/>
    <property type="project" value="UniProtKB-KW"/>
</dbReference>
<dbReference type="GO" id="GO:0003677">
    <property type="term" value="F:DNA binding"/>
    <property type="evidence" value="ECO:0007669"/>
    <property type="project" value="UniProtKB-UniRule"/>
</dbReference>
<dbReference type="GO" id="GO:0003899">
    <property type="term" value="F:DNA-directed RNA polymerase activity"/>
    <property type="evidence" value="ECO:0007669"/>
    <property type="project" value="UniProtKB-UniRule"/>
</dbReference>
<dbReference type="GO" id="GO:0046983">
    <property type="term" value="F:protein dimerization activity"/>
    <property type="evidence" value="ECO:0007669"/>
    <property type="project" value="InterPro"/>
</dbReference>
<dbReference type="GO" id="GO:0006351">
    <property type="term" value="P:DNA-templated transcription"/>
    <property type="evidence" value="ECO:0007669"/>
    <property type="project" value="UniProtKB-UniRule"/>
</dbReference>
<dbReference type="CDD" id="cd06928">
    <property type="entry name" value="RNAP_alpha_NTD"/>
    <property type="match status" value="1"/>
</dbReference>
<dbReference type="FunFam" id="1.10.150.20:FF:000001">
    <property type="entry name" value="DNA-directed RNA polymerase subunit alpha"/>
    <property type="match status" value="1"/>
</dbReference>
<dbReference type="FunFam" id="2.170.120.12:FF:000001">
    <property type="entry name" value="DNA-directed RNA polymerase subunit alpha"/>
    <property type="match status" value="1"/>
</dbReference>
<dbReference type="Gene3D" id="1.10.150.20">
    <property type="entry name" value="5' to 3' exonuclease, C-terminal subdomain"/>
    <property type="match status" value="1"/>
</dbReference>
<dbReference type="Gene3D" id="2.170.120.12">
    <property type="entry name" value="DNA-directed RNA polymerase, insert domain"/>
    <property type="match status" value="1"/>
</dbReference>
<dbReference type="Gene3D" id="3.30.1360.10">
    <property type="entry name" value="RNA polymerase, RBP11-like subunit"/>
    <property type="match status" value="1"/>
</dbReference>
<dbReference type="HAMAP" id="MF_00059">
    <property type="entry name" value="RNApol_bact_RpoA"/>
    <property type="match status" value="1"/>
</dbReference>
<dbReference type="InterPro" id="IPR011262">
    <property type="entry name" value="DNA-dir_RNA_pol_insert"/>
</dbReference>
<dbReference type="InterPro" id="IPR011263">
    <property type="entry name" value="DNA-dir_RNA_pol_RpoA/D/Rpb3"/>
</dbReference>
<dbReference type="InterPro" id="IPR011773">
    <property type="entry name" value="DNA-dir_RpoA"/>
</dbReference>
<dbReference type="InterPro" id="IPR036603">
    <property type="entry name" value="RBP11-like"/>
</dbReference>
<dbReference type="InterPro" id="IPR011260">
    <property type="entry name" value="RNAP_asu_C"/>
</dbReference>
<dbReference type="InterPro" id="IPR036643">
    <property type="entry name" value="RNApol_insert_sf"/>
</dbReference>
<dbReference type="NCBIfam" id="NF003513">
    <property type="entry name" value="PRK05182.1-2"/>
    <property type="match status" value="1"/>
</dbReference>
<dbReference type="NCBIfam" id="NF003519">
    <property type="entry name" value="PRK05182.2-5"/>
    <property type="match status" value="1"/>
</dbReference>
<dbReference type="NCBIfam" id="TIGR02027">
    <property type="entry name" value="rpoA"/>
    <property type="match status" value="1"/>
</dbReference>
<dbReference type="Pfam" id="PF01000">
    <property type="entry name" value="RNA_pol_A_bac"/>
    <property type="match status" value="1"/>
</dbReference>
<dbReference type="Pfam" id="PF03118">
    <property type="entry name" value="RNA_pol_A_CTD"/>
    <property type="match status" value="1"/>
</dbReference>
<dbReference type="Pfam" id="PF01193">
    <property type="entry name" value="RNA_pol_L"/>
    <property type="match status" value="1"/>
</dbReference>
<dbReference type="SMART" id="SM00662">
    <property type="entry name" value="RPOLD"/>
    <property type="match status" value="1"/>
</dbReference>
<dbReference type="SUPFAM" id="SSF47789">
    <property type="entry name" value="C-terminal domain of RNA polymerase alpha subunit"/>
    <property type="match status" value="1"/>
</dbReference>
<dbReference type="SUPFAM" id="SSF56553">
    <property type="entry name" value="Insert subdomain of RNA polymerase alpha subunit"/>
    <property type="match status" value="1"/>
</dbReference>
<dbReference type="SUPFAM" id="SSF55257">
    <property type="entry name" value="RBP11-like subunits of RNA polymerase"/>
    <property type="match status" value="1"/>
</dbReference>
<accession>Q5GSW7</accession>
<protein>
    <recommendedName>
        <fullName evidence="1">DNA-directed RNA polymerase subunit alpha</fullName>
        <shortName evidence="1">RNAP subunit alpha</shortName>
        <ecNumber evidence="1">2.7.7.6</ecNumber>
    </recommendedName>
    <alternativeName>
        <fullName evidence="1">RNA polymerase subunit alpha</fullName>
    </alternativeName>
    <alternativeName>
        <fullName evidence="1">Transcriptase subunit alpha</fullName>
    </alternativeName>
</protein>
<evidence type="ECO:0000255" key="1">
    <source>
        <dbReference type="HAMAP-Rule" id="MF_00059"/>
    </source>
</evidence>
<comment type="function">
    <text evidence="1">DNA-dependent RNA polymerase catalyzes the transcription of DNA into RNA using the four ribonucleoside triphosphates as substrates.</text>
</comment>
<comment type="catalytic activity">
    <reaction evidence="1">
        <text>RNA(n) + a ribonucleoside 5'-triphosphate = RNA(n+1) + diphosphate</text>
        <dbReference type="Rhea" id="RHEA:21248"/>
        <dbReference type="Rhea" id="RHEA-COMP:14527"/>
        <dbReference type="Rhea" id="RHEA-COMP:17342"/>
        <dbReference type="ChEBI" id="CHEBI:33019"/>
        <dbReference type="ChEBI" id="CHEBI:61557"/>
        <dbReference type="ChEBI" id="CHEBI:140395"/>
        <dbReference type="EC" id="2.7.7.6"/>
    </reaction>
</comment>
<comment type="subunit">
    <text evidence="1">Homodimer. The RNAP catalytic core consists of 2 alpha, 1 beta, 1 beta' and 1 omega subunit. When a sigma factor is associated with the core the holoenzyme is formed, which can initiate transcription.</text>
</comment>
<comment type="domain">
    <text evidence="1">The N-terminal domain is essential for RNAP assembly and basal transcription, whereas the C-terminal domain is involved in interaction with transcriptional regulators and with upstream promoter elements.</text>
</comment>
<comment type="similarity">
    <text evidence="1">Belongs to the RNA polymerase alpha chain family.</text>
</comment>
<feature type="chain" id="PRO_0000225312" description="DNA-directed RNA polymerase subunit alpha">
    <location>
        <begin position="1"/>
        <end position="355"/>
    </location>
</feature>
<feature type="region of interest" description="Alpha N-terminal domain (alpha-NTD)" evidence="1">
    <location>
        <begin position="1"/>
        <end position="248"/>
    </location>
</feature>
<feature type="region of interest" description="Alpha C-terminal domain (alpha-CTD)" evidence="1">
    <location>
        <begin position="267"/>
        <end position="355"/>
    </location>
</feature>